<reference key="1">
    <citation type="journal article" date="2000" name="Nature">
        <title>The genome sequence of the thermoacidophilic scavenger Thermoplasma acidophilum.</title>
        <authorList>
            <person name="Ruepp A."/>
            <person name="Graml W."/>
            <person name="Santos-Martinez M.-L."/>
            <person name="Koretke K.K."/>
            <person name="Volker C."/>
            <person name="Mewes H.-W."/>
            <person name="Frishman D."/>
            <person name="Stocker S."/>
            <person name="Lupas A.N."/>
            <person name="Baumeister W."/>
        </authorList>
    </citation>
    <scope>NUCLEOTIDE SEQUENCE [LARGE SCALE GENOMIC DNA]</scope>
    <source>
        <strain>ATCC 25905 / DSM 1728 / JCM 9062 / NBRC 15155 / AMRC-C165</strain>
    </source>
</reference>
<comment type="function">
    <text evidence="1">Protein S19 forms a complex with S13 that binds strongly to the 16S ribosomal RNA.</text>
</comment>
<comment type="similarity">
    <text evidence="2">Belongs to the universal ribosomal protein uS19 family.</text>
</comment>
<organism>
    <name type="scientific">Thermoplasma acidophilum (strain ATCC 25905 / DSM 1728 / JCM 9062 / NBRC 15155 / AMRC-C165)</name>
    <dbReference type="NCBI Taxonomy" id="273075"/>
    <lineage>
        <taxon>Archaea</taxon>
        <taxon>Methanobacteriati</taxon>
        <taxon>Thermoplasmatota</taxon>
        <taxon>Thermoplasmata</taxon>
        <taxon>Thermoplasmatales</taxon>
        <taxon>Thermoplasmataceae</taxon>
        <taxon>Thermoplasma</taxon>
    </lineage>
</organism>
<proteinExistence type="inferred from homology"/>
<keyword id="KW-1185">Reference proteome</keyword>
<keyword id="KW-0687">Ribonucleoprotein</keyword>
<keyword id="KW-0689">Ribosomal protein</keyword>
<keyword id="KW-0694">RNA-binding</keyword>
<keyword id="KW-0699">rRNA-binding</keyword>
<evidence type="ECO:0000250" key="1"/>
<evidence type="ECO:0000305" key="2"/>
<sequence>MVVNKQGSVKSIKRKARKSKKVVSGRAKEFTYKGYSLEDLQKMSMEELIKILPARARRTLLREPNYEQKKLMEKLESDEEDVKTHVRDVIILPNYVGKIVEVYNGNSYFKFEIKPEMIGHYLGEFVMTRKEVKHSGPGVGATRSSKFMPLK</sequence>
<protein>
    <recommendedName>
        <fullName evidence="2">Small ribosomal subunit protein uS19</fullName>
    </recommendedName>
    <alternativeName>
        <fullName>30S ribosomal protein S19</fullName>
    </alternativeName>
</protein>
<accession>Q9HIR3</accession>
<name>RS19_THEAC</name>
<feature type="chain" id="PRO_0000130017" description="Small ribosomal subunit protein uS19">
    <location>
        <begin position="1"/>
        <end position="151"/>
    </location>
</feature>
<dbReference type="EMBL" id="AL445067">
    <property type="protein sequence ID" value="CAC12391.1"/>
    <property type="molecule type" value="Genomic_DNA"/>
</dbReference>
<dbReference type="RefSeq" id="WP_010901675.1">
    <property type="nucleotide sequence ID" value="NC_002578.1"/>
</dbReference>
<dbReference type="SMR" id="Q9HIR3"/>
<dbReference type="FunCoup" id="Q9HIR3">
    <property type="interactions" value="151"/>
</dbReference>
<dbReference type="STRING" id="273075.gene:9572490"/>
<dbReference type="PaxDb" id="273075-Ta1267"/>
<dbReference type="EnsemblBacteria" id="CAC12391">
    <property type="protein sequence ID" value="CAC12391"/>
    <property type="gene ID" value="CAC12391"/>
</dbReference>
<dbReference type="KEGG" id="tac:Ta1267"/>
<dbReference type="eggNOG" id="arCOG04099">
    <property type="taxonomic scope" value="Archaea"/>
</dbReference>
<dbReference type="HOGENOM" id="CLU_097347_1_0_2"/>
<dbReference type="InParanoid" id="Q9HIR3"/>
<dbReference type="OrthoDB" id="30559at2157"/>
<dbReference type="Proteomes" id="UP000001024">
    <property type="component" value="Chromosome"/>
</dbReference>
<dbReference type="GO" id="GO:0022627">
    <property type="term" value="C:cytosolic small ribosomal subunit"/>
    <property type="evidence" value="ECO:0007669"/>
    <property type="project" value="TreeGrafter"/>
</dbReference>
<dbReference type="GO" id="GO:0019843">
    <property type="term" value="F:rRNA binding"/>
    <property type="evidence" value="ECO:0007669"/>
    <property type="project" value="UniProtKB-UniRule"/>
</dbReference>
<dbReference type="GO" id="GO:0003735">
    <property type="term" value="F:structural constituent of ribosome"/>
    <property type="evidence" value="ECO:0007669"/>
    <property type="project" value="InterPro"/>
</dbReference>
<dbReference type="GO" id="GO:0000028">
    <property type="term" value="P:ribosomal small subunit assembly"/>
    <property type="evidence" value="ECO:0007669"/>
    <property type="project" value="TreeGrafter"/>
</dbReference>
<dbReference type="GO" id="GO:0006412">
    <property type="term" value="P:translation"/>
    <property type="evidence" value="ECO:0007669"/>
    <property type="project" value="UniProtKB-UniRule"/>
</dbReference>
<dbReference type="FunFam" id="3.30.860.10:FF:000002">
    <property type="entry name" value="40S ribosomal protein S15"/>
    <property type="match status" value="1"/>
</dbReference>
<dbReference type="Gene3D" id="3.30.860.10">
    <property type="entry name" value="30s Ribosomal Protein S19, Chain A"/>
    <property type="match status" value="1"/>
</dbReference>
<dbReference type="HAMAP" id="MF_00531">
    <property type="entry name" value="Ribosomal_uS19"/>
    <property type="match status" value="1"/>
</dbReference>
<dbReference type="InterPro" id="IPR002222">
    <property type="entry name" value="Ribosomal_uS19"/>
</dbReference>
<dbReference type="InterPro" id="IPR020934">
    <property type="entry name" value="Ribosomal_uS19_CS"/>
</dbReference>
<dbReference type="InterPro" id="IPR005713">
    <property type="entry name" value="Ribosomal_uS19_euk/arc"/>
</dbReference>
<dbReference type="InterPro" id="IPR023575">
    <property type="entry name" value="Ribosomal_uS19_SF"/>
</dbReference>
<dbReference type="NCBIfam" id="NF003121">
    <property type="entry name" value="PRK04038.1"/>
    <property type="match status" value="1"/>
</dbReference>
<dbReference type="NCBIfam" id="TIGR01025">
    <property type="entry name" value="uS19_arch"/>
    <property type="match status" value="1"/>
</dbReference>
<dbReference type="PANTHER" id="PTHR11880">
    <property type="entry name" value="RIBOSOMAL PROTEIN S19P FAMILY MEMBER"/>
    <property type="match status" value="1"/>
</dbReference>
<dbReference type="PANTHER" id="PTHR11880:SF2">
    <property type="entry name" value="SMALL RIBOSOMAL SUBUNIT PROTEIN US19"/>
    <property type="match status" value="1"/>
</dbReference>
<dbReference type="Pfam" id="PF00203">
    <property type="entry name" value="Ribosomal_S19"/>
    <property type="match status" value="1"/>
</dbReference>
<dbReference type="PIRSF" id="PIRSF002144">
    <property type="entry name" value="Ribosomal_S19"/>
    <property type="match status" value="1"/>
</dbReference>
<dbReference type="PRINTS" id="PR00975">
    <property type="entry name" value="RIBOSOMALS19"/>
</dbReference>
<dbReference type="SUPFAM" id="SSF54570">
    <property type="entry name" value="Ribosomal protein S19"/>
    <property type="match status" value="1"/>
</dbReference>
<dbReference type="PROSITE" id="PS00323">
    <property type="entry name" value="RIBOSOMAL_S19"/>
    <property type="match status" value="1"/>
</dbReference>
<gene>
    <name type="primary">rps19</name>
    <name type="ordered locus">Ta1267</name>
</gene>